<feature type="chain" id="PRO_0000203888" description="DNA-binding protein Fis">
    <location>
        <begin position="1"/>
        <end position="99"/>
    </location>
</feature>
<feature type="DNA-binding region" description="H-T-H motif" evidence="1">
    <location>
        <begin position="75"/>
        <end position="94"/>
    </location>
</feature>
<reference key="1">
    <citation type="journal article" date="2001" name="Proc. Natl. Acad. Sci. U.S.A.">
        <title>Complete genomic sequence of Pasteurella multocida Pm70.</title>
        <authorList>
            <person name="May B.J."/>
            <person name="Zhang Q."/>
            <person name="Li L.L."/>
            <person name="Paustian M.L."/>
            <person name="Whittam T.S."/>
            <person name="Kapur V."/>
        </authorList>
    </citation>
    <scope>NUCLEOTIDE SEQUENCE [LARGE SCALE GENOMIC DNA]</scope>
    <source>
        <strain>Pm70</strain>
    </source>
</reference>
<evidence type="ECO:0000255" key="1">
    <source>
        <dbReference type="HAMAP-Rule" id="MF_00166"/>
    </source>
</evidence>
<gene>
    <name evidence="1" type="primary">fis</name>
    <name type="ordered locus">PM1086</name>
</gene>
<accession>P57902</accession>
<name>FIS_PASMU</name>
<organism>
    <name type="scientific">Pasteurella multocida (strain Pm70)</name>
    <dbReference type="NCBI Taxonomy" id="272843"/>
    <lineage>
        <taxon>Bacteria</taxon>
        <taxon>Pseudomonadati</taxon>
        <taxon>Pseudomonadota</taxon>
        <taxon>Gammaproteobacteria</taxon>
        <taxon>Pasteurellales</taxon>
        <taxon>Pasteurellaceae</taxon>
        <taxon>Pasteurella</taxon>
    </lineage>
</organism>
<proteinExistence type="inferred from homology"/>
<dbReference type="EMBL" id="AE004439">
    <property type="protein sequence ID" value="AAK03170.1"/>
    <property type="molecule type" value="Genomic_DNA"/>
</dbReference>
<dbReference type="RefSeq" id="WP_005723276.1">
    <property type="nucleotide sequence ID" value="NC_002663.1"/>
</dbReference>
<dbReference type="SMR" id="P57902"/>
<dbReference type="STRING" id="272843.PM1086"/>
<dbReference type="EnsemblBacteria" id="AAK03170">
    <property type="protein sequence ID" value="AAK03170"/>
    <property type="gene ID" value="PM1086"/>
</dbReference>
<dbReference type="GeneID" id="77206404"/>
<dbReference type="KEGG" id="pmu:PM1086"/>
<dbReference type="HOGENOM" id="CLU_158040_3_0_6"/>
<dbReference type="OrthoDB" id="9802388at2"/>
<dbReference type="Proteomes" id="UP000000809">
    <property type="component" value="Chromosome"/>
</dbReference>
<dbReference type="CollecTF" id="EXPREG_00000b60"/>
<dbReference type="GO" id="GO:0003700">
    <property type="term" value="F:DNA-binding transcription factor activity"/>
    <property type="evidence" value="ECO:0007669"/>
    <property type="project" value="UniProtKB-UniRule"/>
</dbReference>
<dbReference type="GO" id="GO:0043565">
    <property type="term" value="F:sequence-specific DNA binding"/>
    <property type="evidence" value="ECO:0007669"/>
    <property type="project" value="InterPro"/>
</dbReference>
<dbReference type="GO" id="GO:0045893">
    <property type="term" value="P:positive regulation of DNA-templated transcription"/>
    <property type="evidence" value="ECO:0000269"/>
    <property type="project" value="CollecTF"/>
</dbReference>
<dbReference type="FunFam" id="1.10.10.60:FF:000006">
    <property type="entry name" value="DNA-binding protein Fis"/>
    <property type="match status" value="1"/>
</dbReference>
<dbReference type="Gene3D" id="1.10.10.60">
    <property type="entry name" value="Homeodomain-like"/>
    <property type="match status" value="1"/>
</dbReference>
<dbReference type="HAMAP" id="MF_00166">
    <property type="entry name" value="DNA_binding_Fis"/>
    <property type="match status" value="1"/>
</dbReference>
<dbReference type="InterPro" id="IPR005412">
    <property type="entry name" value="Fis_DNA-bd"/>
</dbReference>
<dbReference type="InterPro" id="IPR009057">
    <property type="entry name" value="Homeodomain-like_sf"/>
</dbReference>
<dbReference type="InterPro" id="IPR002197">
    <property type="entry name" value="HTH_Fis"/>
</dbReference>
<dbReference type="InterPro" id="IPR050207">
    <property type="entry name" value="Trans_regulatory_Fis"/>
</dbReference>
<dbReference type="NCBIfam" id="NF001659">
    <property type="entry name" value="PRK00430.1"/>
    <property type="match status" value="1"/>
</dbReference>
<dbReference type="PANTHER" id="PTHR47918">
    <property type="entry name" value="DNA-BINDING PROTEIN FIS"/>
    <property type="match status" value="1"/>
</dbReference>
<dbReference type="PANTHER" id="PTHR47918:SF1">
    <property type="entry name" value="DNA-BINDING PROTEIN FIS"/>
    <property type="match status" value="1"/>
</dbReference>
<dbReference type="Pfam" id="PF02954">
    <property type="entry name" value="HTH_8"/>
    <property type="match status" value="1"/>
</dbReference>
<dbReference type="PIRSF" id="PIRSF002097">
    <property type="entry name" value="DNA-binding_Fis"/>
    <property type="match status" value="1"/>
</dbReference>
<dbReference type="PRINTS" id="PR01591">
    <property type="entry name" value="DNABINDNGFIS"/>
</dbReference>
<dbReference type="PRINTS" id="PR01590">
    <property type="entry name" value="HTHFIS"/>
</dbReference>
<dbReference type="SUPFAM" id="SSF46689">
    <property type="entry name" value="Homeodomain-like"/>
    <property type="match status" value="1"/>
</dbReference>
<comment type="function">
    <text evidence="1">Activates ribosomal RNA transcription. Plays a direct role in upstream activation of rRNA promoters.</text>
</comment>
<comment type="subunit">
    <text evidence="1">Homodimer.</text>
</comment>
<comment type="similarity">
    <text evidence="1">Belongs to the transcriptional regulatory Fis family.</text>
</comment>
<sequence length="99" mass="11223">MLEQQRNPADALTVSVLNSQSQVTNKPLRDSVKQALRNYLSQLDGQDVNELYELVLAEVEHPMLDMVMQYTRGNQTRAATMLGINRGTLRKKLKKYGMG</sequence>
<protein>
    <recommendedName>
        <fullName evidence="1">DNA-binding protein Fis</fullName>
    </recommendedName>
</protein>
<keyword id="KW-0010">Activator</keyword>
<keyword id="KW-0238">DNA-binding</keyword>
<keyword id="KW-1185">Reference proteome</keyword>
<keyword id="KW-0804">Transcription</keyword>
<keyword id="KW-0805">Transcription regulation</keyword>